<organism>
    <name type="scientific">Bartonella henselae (strain ATCC 49882 / DSM 28221 / CCUG 30454 / Houston 1)</name>
    <name type="common">Rochalimaea henselae</name>
    <dbReference type="NCBI Taxonomy" id="283166"/>
    <lineage>
        <taxon>Bacteria</taxon>
        <taxon>Pseudomonadati</taxon>
        <taxon>Pseudomonadota</taxon>
        <taxon>Alphaproteobacteria</taxon>
        <taxon>Hyphomicrobiales</taxon>
        <taxon>Bartonellaceae</taxon>
        <taxon>Bartonella</taxon>
    </lineage>
</organism>
<keyword id="KW-0687">Ribonucleoprotein</keyword>
<keyword id="KW-0689">Ribosomal protein</keyword>
<keyword id="KW-0694">RNA-binding</keyword>
<keyword id="KW-0699">rRNA-binding</keyword>
<feature type="chain" id="PRO_0000132341" description="Small ribosomal subunit protein uS4">
    <location>
        <begin position="1"/>
        <end position="205"/>
    </location>
</feature>
<feature type="domain" description="S4 RNA-binding" evidence="1">
    <location>
        <begin position="94"/>
        <end position="157"/>
    </location>
</feature>
<feature type="region of interest" description="Disordered" evidence="2">
    <location>
        <begin position="1"/>
        <end position="46"/>
    </location>
</feature>
<feature type="compositionally biased region" description="Basic and acidic residues" evidence="2">
    <location>
        <begin position="1"/>
        <end position="16"/>
    </location>
</feature>
<comment type="function">
    <text evidence="1">One of the primary rRNA binding proteins, it binds directly to 16S rRNA where it nucleates assembly of the body of the 30S subunit.</text>
</comment>
<comment type="function">
    <text evidence="1">With S5 and S12 plays an important role in translational accuracy.</text>
</comment>
<comment type="subunit">
    <text evidence="1">Part of the 30S ribosomal subunit. Contacts protein S5. The interaction surface between S4 and S5 is involved in control of translational fidelity.</text>
</comment>
<comment type="similarity">
    <text evidence="1">Belongs to the universal ribosomal protein uS4 family.</text>
</comment>
<accession>Q6G5E2</accession>
<proteinExistence type="inferred from homology"/>
<dbReference type="EMBL" id="BX897699">
    <property type="protein sequence ID" value="CAF27638.1"/>
    <property type="molecule type" value="Genomic_DNA"/>
</dbReference>
<dbReference type="RefSeq" id="WP_011180734.1">
    <property type="nucleotide sequence ID" value="NZ_LRIJ02000001.1"/>
</dbReference>
<dbReference type="SMR" id="Q6G5E2"/>
<dbReference type="PaxDb" id="283166-BH08390"/>
<dbReference type="EnsemblBacteria" id="CAF27638">
    <property type="protein sequence ID" value="CAF27638"/>
    <property type="gene ID" value="BH08390"/>
</dbReference>
<dbReference type="GeneID" id="92985497"/>
<dbReference type="KEGG" id="bhe:BH08390"/>
<dbReference type="eggNOG" id="COG0522">
    <property type="taxonomic scope" value="Bacteria"/>
</dbReference>
<dbReference type="OrthoDB" id="9803672at2"/>
<dbReference type="Proteomes" id="UP000000421">
    <property type="component" value="Chromosome"/>
</dbReference>
<dbReference type="GO" id="GO:0015935">
    <property type="term" value="C:small ribosomal subunit"/>
    <property type="evidence" value="ECO:0007669"/>
    <property type="project" value="InterPro"/>
</dbReference>
<dbReference type="GO" id="GO:0019843">
    <property type="term" value="F:rRNA binding"/>
    <property type="evidence" value="ECO:0007669"/>
    <property type="project" value="UniProtKB-UniRule"/>
</dbReference>
<dbReference type="GO" id="GO:0003735">
    <property type="term" value="F:structural constituent of ribosome"/>
    <property type="evidence" value="ECO:0007669"/>
    <property type="project" value="InterPro"/>
</dbReference>
<dbReference type="GO" id="GO:0042274">
    <property type="term" value="P:ribosomal small subunit biogenesis"/>
    <property type="evidence" value="ECO:0007669"/>
    <property type="project" value="TreeGrafter"/>
</dbReference>
<dbReference type="GO" id="GO:0006412">
    <property type="term" value="P:translation"/>
    <property type="evidence" value="ECO:0007669"/>
    <property type="project" value="UniProtKB-UniRule"/>
</dbReference>
<dbReference type="CDD" id="cd00165">
    <property type="entry name" value="S4"/>
    <property type="match status" value="1"/>
</dbReference>
<dbReference type="FunFam" id="3.10.290.10:FF:000001">
    <property type="entry name" value="30S ribosomal protein S4"/>
    <property type="match status" value="1"/>
</dbReference>
<dbReference type="Gene3D" id="1.10.1050.10">
    <property type="entry name" value="Ribosomal Protein S4 Delta 41, Chain A, domain 1"/>
    <property type="match status" value="1"/>
</dbReference>
<dbReference type="Gene3D" id="3.10.290.10">
    <property type="entry name" value="RNA-binding S4 domain"/>
    <property type="match status" value="1"/>
</dbReference>
<dbReference type="HAMAP" id="MF_01306_B">
    <property type="entry name" value="Ribosomal_uS4_B"/>
    <property type="match status" value="1"/>
</dbReference>
<dbReference type="InterPro" id="IPR022801">
    <property type="entry name" value="Ribosomal_uS4"/>
</dbReference>
<dbReference type="InterPro" id="IPR005709">
    <property type="entry name" value="Ribosomal_uS4_bac-type"/>
</dbReference>
<dbReference type="InterPro" id="IPR018079">
    <property type="entry name" value="Ribosomal_uS4_CS"/>
</dbReference>
<dbReference type="InterPro" id="IPR001912">
    <property type="entry name" value="Ribosomal_uS4_N"/>
</dbReference>
<dbReference type="InterPro" id="IPR002942">
    <property type="entry name" value="S4_RNA-bd"/>
</dbReference>
<dbReference type="InterPro" id="IPR036986">
    <property type="entry name" value="S4_RNA-bd_sf"/>
</dbReference>
<dbReference type="NCBIfam" id="NF003717">
    <property type="entry name" value="PRK05327.1"/>
    <property type="match status" value="1"/>
</dbReference>
<dbReference type="NCBIfam" id="TIGR01017">
    <property type="entry name" value="rpsD_bact"/>
    <property type="match status" value="1"/>
</dbReference>
<dbReference type="PANTHER" id="PTHR11831">
    <property type="entry name" value="30S 40S RIBOSOMAL PROTEIN"/>
    <property type="match status" value="1"/>
</dbReference>
<dbReference type="PANTHER" id="PTHR11831:SF4">
    <property type="entry name" value="SMALL RIBOSOMAL SUBUNIT PROTEIN US4M"/>
    <property type="match status" value="1"/>
</dbReference>
<dbReference type="Pfam" id="PF00163">
    <property type="entry name" value="Ribosomal_S4"/>
    <property type="match status" value="1"/>
</dbReference>
<dbReference type="Pfam" id="PF01479">
    <property type="entry name" value="S4"/>
    <property type="match status" value="1"/>
</dbReference>
<dbReference type="SMART" id="SM01390">
    <property type="entry name" value="Ribosomal_S4"/>
    <property type="match status" value="1"/>
</dbReference>
<dbReference type="SMART" id="SM00363">
    <property type="entry name" value="S4"/>
    <property type="match status" value="1"/>
</dbReference>
<dbReference type="SUPFAM" id="SSF55174">
    <property type="entry name" value="Alpha-L RNA-binding motif"/>
    <property type="match status" value="1"/>
</dbReference>
<dbReference type="PROSITE" id="PS00632">
    <property type="entry name" value="RIBOSOMAL_S4"/>
    <property type="match status" value="1"/>
</dbReference>
<dbReference type="PROSITE" id="PS50889">
    <property type="entry name" value="S4"/>
    <property type="match status" value="1"/>
</dbReference>
<sequence>MSKRETTKYKIDRRMGENIWGRPKSPVNRRDYGPGQHGQRRKGKLSDYGVQLRAKQKLKGFYGDISEKQFRKTYEEAARRRGDTGENLIGLLESRLDAVIYRAKFVPTIFASRQFINHGHVNVNGRRTNIQSYRCKPGDVIEIREKSKQLVLVLESVQLVERDVPEYIEADHNQMKATFTRIPAFADVPYAVQMEPNLVVEFYSR</sequence>
<evidence type="ECO:0000255" key="1">
    <source>
        <dbReference type="HAMAP-Rule" id="MF_01306"/>
    </source>
</evidence>
<evidence type="ECO:0000256" key="2">
    <source>
        <dbReference type="SAM" id="MobiDB-lite"/>
    </source>
</evidence>
<evidence type="ECO:0000305" key="3"/>
<protein>
    <recommendedName>
        <fullName evidence="1">Small ribosomal subunit protein uS4</fullName>
    </recommendedName>
    <alternativeName>
        <fullName evidence="3">30S ribosomal protein S4</fullName>
    </alternativeName>
</protein>
<gene>
    <name evidence="1" type="primary">rpsD</name>
    <name type="ordered locus">BH08390</name>
</gene>
<name>RS4_BARHE</name>
<reference key="1">
    <citation type="journal article" date="2004" name="Proc. Natl. Acad. Sci. U.S.A.">
        <title>The louse-borne human pathogen Bartonella quintana is a genomic derivative of the zoonotic agent Bartonella henselae.</title>
        <authorList>
            <person name="Alsmark U.C.M."/>
            <person name="Frank A.C."/>
            <person name="Karlberg E.O."/>
            <person name="Legault B.-A."/>
            <person name="Ardell D.H."/>
            <person name="Canbaeck B."/>
            <person name="Eriksson A.-S."/>
            <person name="Naeslund A.K."/>
            <person name="Handley S.A."/>
            <person name="Huvet M."/>
            <person name="La Scola B."/>
            <person name="Holmberg M."/>
            <person name="Andersson S.G.E."/>
        </authorList>
    </citation>
    <scope>NUCLEOTIDE SEQUENCE [LARGE SCALE GENOMIC DNA]</scope>
    <source>
        <strain>ATCC 49882 / DSM 28221 / CCUG 30454 / Houston 1</strain>
    </source>
</reference>